<sequence length="324" mass="36442">MSTFTPTRNDWQLDEILELFHTAFNDLILQSHLLHRQFFSNNEVQISSLLNIKTGGCPENCKYCSQSAHYKTDLKKESLLDIESIKKAIQTAKKNGADRFCFAAAWRQVRDRDLEYICDIIDLIKSENLESCASLGMVTLEQAKKLKNAGLDFYNHNIDTSRDFYPNVTTTRSYDDRLTSLNNIHEAGINICSGGILGLGESVEDRAKMLLTLANLKEHPLSVPINRLVPIKGTPFENNAKIDNIDFIKTIAVARILMPKSYIRLAAGRMSMSEEMQALCLFAGANSIFYGEKLLTTPNADCNDDRNLLSKLGAKTKEPVFFNS</sequence>
<feature type="chain" id="PRO_0000381374" description="Biotin synthase">
    <location>
        <begin position="1"/>
        <end position="324"/>
    </location>
</feature>
<feature type="domain" description="Radical SAM core" evidence="2">
    <location>
        <begin position="42"/>
        <end position="269"/>
    </location>
</feature>
<feature type="binding site" evidence="1">
    <location>
        <position position="57"/>
    </location>
    <ligand>
        <name>[4Fe-4S] cluster</name>
        <dbReference type="ChEBI" id="CHEBI:49883"/>
        <note>4Fe-4S-S-AdoMet</note>
    </ligand>
</feature>
<feature type="binding site" evidence="1">
    <location>
        <position position="61"/>
    </location>
    <ligand>
        <name>[4Fe-4S] cluster</name>
        <dbReference type="ChEBI" id="CHEBI:49883"/>
        <note>4Fe-4S-S-AdoMet</note>
    </ligand>
</feature>
<feature type="binding site" evidence="1">
    <location>
        <position position="64"/>
    </location>
    <ligand>
        <name>[4Fe-4S] cluster</name>
        <dbReference type="ChEBI" id="CHEBI:49883"/>
        <note>4Fe-4S-S-AdoMet</note>
    </ligand>
</feature>
<feature type="binding site" evidence="1">
    <location>
        <position position="101"/>
    </location>
    <ligand>
        <name>[2Fe-2S] cluster</name>
        <dbReference type="ChEBI" id="CHEBI:190135"/>
    </ligand>
</feature>
<feature type="binding site" evidence="1">
    <location>
        <position position="132"/>
    </location>
    <ligand>
        <name>[2Fe-2S] cluster</name>
        <dbReference type="ChEBI" id="CHEBI:190135"/>
    </ligand>
</feature>
<feature type="binding site" evidence="1">
    <location>
        <position position="192"/>
    </location>
    <ligand>
        <name>[2Fe-2S] cluster</name>
        <dbReference type="ChEBI" id="CHEBI:190135"/>
    </ligand>
</feature>
<feature type="binding site" evidence="1">
    <location>
        <position position="264"/>
    </location>
    <ligand>
        <name>[2Fe-2S] cluster</name>
        <dbReference type="ChEBI" id="CHEBI:190135"/>
    </ligand>
</feature>
<comment type="function">
    <text evidence="1">Catalyzes the conversion of dethiobiotin (DTB) to biotin by the insertion of a sulfur atom into dethiobiotin via a radical-based mechanism.</text>
</comment>
<comment type="catalytic activity">
    <reaction evidence="1">
        <text>(4R,5S)-dethiobiotin + (sulfur carrier)-SH + 2 reduced [2Fe-2S]-[ferredoxin] + 2 S-adenosyl-L-methionine = (sulfur carrier)-H + biotin + 2 5'-deoxyadenosine + 2 L-methionine + 2 oxidized [2Fe-2S]-[ferredoxin]</text>
        <dbReference type="Rhea" id="RHEA:22060"/>
        <dbReference type="Rhea" id="RHEA-COMP:10000"/>
        <dbReference type="Rhea" id="RHEA-COMP:10001"/>
        <dbReference type="Rhea" id="RHEA-COMP:14737"/>
        <dbReference type="Rhea" id="RHEA-COMP:14739"/>
        <dbReference type="ChEBI" id="CHEBI:17319"/>
        <dbReference type="ChEBI" id="CHEBI:29917"/>
        <dbReference type="ChEBI" id="CHEBI:33737"/>
        <dbReference type="ChEBI" id="CHEBI:33738"/>
        <dbReference type="ChEBI" id="CHEBI:57586"/>
        <dbReference type="ChEBI" id="CHEBI:57844"/>
        <dbReference type="ChEBI" id="CHEBI:59789"/>
        <dbReference type="ChEBI" id="CHEBI:64428"/>
        <dbReference type="ChEBI" id="CHEBI:149473"/>
        <dbReference type="EC" id="2.8.1.6"/>
    </reaction>
</comment>
<comment type="cofactor">
    <cofactor evidence="1">
        <name>[4Fe-4S] cluster</name>
        <dbReference type="ChEBI" id="CHEBI:49883"/>
    </cofactor>
    <text evidence="1">Binds 1 [4Fe-4S] cluster. The cluster is coordinated with 3 cysteines and an exchangeable S-adenosyl-L-methionine.</text>
</comment>
<comment type="cofactor">
    <cofactor evidence="1">
        <name>[2Fe-2S] cluster</name>
        <dbReference type="ChEBI" id="CHEBI:190135"/>
    </cofactor>
    <text evidence="1">Binds 1 [2Fe-2S] cluster. The cluster is coordinated with 3 cysteines and 1 arginine.</text>
</comment>
<comment type="pathway">
    <text evidence="1">Cofactor biosynthesis; biotin biosynthesis; biotin from 7,8-diaminononanoate: step 2/2.</text>
</comment>
<comment type="subunit">
    <text evidence="1">Homodimer.</text>
</comment>
<comment type="similarity">
    <text evidence="1">Belongs to the radical SAM superfamily. Biotin synthase family.</text>
</comment>
<organism>
    <name type="scientific">Ehrlichia canis (strain Jake)</name>
    <dbReference type="NCBI Taxonomy" id="269484"/>
    <lineage>
        <taxon>Bacteria</taxon>
        <taxon>Pseudomonadati</taxon>
        <taxon>Pseudomonadota</taxon>
        <taxon>Alphaproteobacteria</taxon>
        <taxon>Rickettsiales</taxon>
        <taxon>Anaplasmataceae</taxon>
        <taxon>Ehrlichia</taxon>
    </lineage>
</organism>
<reference key="1">
    <citation type="journal article" date="2006" name="J. Bacteriol.">
        <title>The genome of the obligately intracellular bacterium Ehrlichia canis reveals themes of complex membrane structure and immune evasion strategies.</title>
        <authorList>
            <person name="Mavromatis K."/>
            <person name="Doyle C.K."/>
            <person name="Lykidis A."/>
            <person name="Ivanova N."/>
            <person name="Francino M.P."/>
            <person name="Chain P."/>
            <person name="Shin M."/>
            <person name="Malfatti S."/>
            <person name="Larimer F."/>
            <person name="Copeland A."/>
            <person name="Detter J.C."/>
            <person name="Land M."/>
            <person name="Richardson P.M."/>
            <person name="Yu X.J."/>
            <person name="Walker D.H."/>
            <person name="McBride J.W."/>
            <person name="Kyrpides N.C."/>
        </authorList>
    </citation>
    <scope>NUCLEOTIDE SEQUENCE [LARGE SCALE GENOMIC DNA]</scope>
    <source>
        <strain>Jake</strain>
    </source>
</reference>
<gene>
    <name evidence="1" type="primary">bioB</name>
    <name type="ordered locus">Ecaj_0657</name>
</gene>
<evidence type="ECO:0000255" key="1">
    <source>
        <dbReference type="HAMAP-Rule" id="MF_01694"/>
    </source>
</evidence>
<evidence type="ECO:0000255" key="2">
    <source>
        <dbReference type="PROSITE-ProRule" id="PRU01266"/>
    </source>
</evidence>
<protein>
    <recommendedName>
        <fullName evidence="1">Biotin synthase</fullName>
        <ecNumber evidence="1">2.8.1.6</ecNumber>
    </recommendedName>
</protein>
<accession>Q3YRG6</accession>
<dbReference type="EC" id="2.8.1.6" evidence="1"/>
<dbReference type="EMBL" id="CP000107">
    <property type="protein sequence ID" value="AAZ68689.1"/>
    <property type="molecule type" value="Genomic_DNA"/>
</dbReference>
<dbReference type="RefSeq" id="WP_011304766.1">
    <property type="nucleotide sequence ID" value="NC_007354.1"/>
</dbReference>
<dbReference type="SMR" id="Q3YRG6"/>
<dbReference type="FunCoup" id="Q3YRG6">
    <property type="interactions" value="228"/>
</dbReference>
<dbReference type="STRING" id="269484.Ecaj_0657"/>
<dbReference type="KEGG" id="ecn:Ecaj_0657"/>
<dbReference type="eggNOG" id="COG0502">
    <property type="taxonomic scope" value="Bacteria"/>
</dbReference>
<dbReference type="HOGENOM" id="CLU_033172_1_2_5"/>
<dbReference type="InParanoid" id="Q3YRG6"/>
<dbReference type="UniPathway" id="UPA00078">
    <property type="reaction ID" value="UER00162"/>
</dbReference>
<dbReference type="Proteomes" id="UP000000435">
    <property type="component" value="Chromosome"/>
</dbReference>
<dbReference type="GO" id="GO:0051537">
    <property type="term" value="F:2 iron, 2 sulfur cluster binding"/>
    <property type="evidence" value="ECO:0007669"/>
    <property type="project" value="UniProtKB-KW"/>
</dbReference>
<dbReference type="GO" id="GO:0051539">
    <property type="term" value="F:4 iron, 4 sulfur cluster binding"/>
    <property type="evidence" value="ECO:0007669"/>
    <property type="project" value="UniProtKB-KW"/>
</dbReference>
<dbReference type="GO" id="GO:0004076">
    <property type="term" value="F:biotin synthase activity"/>
    <property type="evidence" value="ECO:0007669"/>
    <property type="project" value="UniProtKB-UniRule"/>
</dbReference>
<dbReference type="GO" id="GO:0005506">
    <property type="term" value="F:iron ion binding"/>
    <property type="evidence" value="ECO:0007669"/>
    <property type="project" value="UniProtKB-UniRule"/>
</dbReference>
<dbReference type="GO" id="GO:0009102">
    <property type="term" value="P:biotin biosynthetic process"/>
    <property type="evidence" value="ECO:0007669"/>
    <property type="project" value="UniProtKB-UniRule"/>
</dbReference>
<dbReference type="CDD" id="cd01335">
    <property type="entry name" value="Radical_SAM"/>
    <property type="match status" value="1"/>
</dbReference>
<dbReference type="Gene3D" id="3.20.20.70">
    <property type="entry name" value="Aldolase class I"/>
    <property type="match status" value="1"/>
</dbReference>
<dbReference type="HAMAP" id="MF_01694">
    <property type="entry name" value="BioB"/>
    <property type="match status" value="1"/>
</dbReference>
<dbReference type="InterPro" id="IPR013785">
    <property type="entry name" value="Aldolase_TIM"/>
</dbReference>
<dbReference type="InterPro" id="IPR010722">
    <property type="entry name" value="BATS_dom"/>
</dbReference>
<dbReference type="InterPro" id="IPR002684">
    <property type="entry name" value="Biotin_synth/BioAB"/>
</dbReference>
<dbReference type="InterPro" id="IPR024177">
    <property type="entry name" value="Biotin_synthase"/>
</dbReference>
<dbReference type="InterPro" id="IPR006638">
    <property type="entry name" value="Elp3/MiaA/NifB-like_rSAM"/>
</dbReference>
<dbReference type="InterPro" id="IPR007197">
    <property type="entry name" value="rSAM"/>
</dbReference>
<dbReference type="NCBIfam" id="TIGR00433">
    <property type="entry name" value="bioB"/>
    <property type="match status" value="1"/>
</dbReference>
<dbReference type="PANTHER" id="PTHR22976">
    <property type="entry name" value="BIOTIN SYNTHASE"/>
    <property type="match status" value="1"/>
</dbReference>
<dbReference type="PANTHER" id="PTHR22976:SF2">
    <property type="entry name" value="BIOTIN SYNTHASE, MITOCHONDRIAL"/>
    <property type="match status" value="1"/>
</dbReference>
<dbReference type="Pfam" id="PF06968">
    <property type="entry name" value="BATS"/>
    <property type="match status" value="1"/>
</dbReference>
<dbReference type="Pfam" id="PF04055">
    <property type="entry name" value="Radical_SAM"/>
    <property type="match status" value="1"/>
</dbReference>
<dbReference type="PIRSF" id="PIRSF001619">
    <property type="entry name" value="Biotin_synth"/>
    <property type="match status" value="1"/>
</dbReference>
<dbReference type="SFLD" id="SFLDF00272">
    <property type="entry name" value="biotin_synthase"/>
    <property type="match status" value="1"/>
</dbReference>
<dbReference type="SFLD" id="SFLDS00029">
    <property type="entry name" value="Radical_SAM"/>
    <property type="match status" value="1"/>
</dbReference>
<dbReference type="SMART" id="SM00876">
    <property type="entry name" value="BATS"/>
    <property type="match status" value="1"/>
</dbReference>
<dbReference type="SMART" id="SM00729">
    <property type="entry name" value="Elp3"/>
    <property type="match status" value="1"/>
</dbReference>
<dbReference type="SUPFAM" id="SSF102114">
    <property type="entry name" value="Radical SAM enzymes"/>
    <property type="match status" value="1"/>
</dbReference>
<dbReference type="PROSITE" id="PS51918">
    <property type="entry name" value="RADICAL_SAM"/>
    <property type="match status" value="1"/>
</dbReference>
<proteinExistence type="inferred from homology"/>
<keyword id="KW-0001">2Fe-2S</keyword>
<keyword id="KW-0004">4Fe-4S</keyword>
<keyword id="KW-0093">Biotin biosynthesis</keyword>
<keyword id="KW-0408">Iron</keyword>
<keyword id="KW-0411">Iron-sulfur</keyword>
<keyword id="KW-0479">Metal-binding</keyword>
<keyword id="KW-0949">S-adenosyl-L-methionine</keyword>
<keyword id="KW-0808">Transferase</keyword>
<name>BIOB_EHRCJ</name>